<comment type="function">
    <text evidence="1">The glycine cleavage system catalyzes the degradation of glycine. The H protein shuttles the methylamine group of glycine from the P protein to the T protein.</text>
</comment>
<comment type="cofactor">
    <cofactor evidence="1">
        <name>(R)-lipoate</name>
        <dbReference type="ChEBI" id="CHEBI:83088"/>
    </cofactor>
    <text evidence="1">Binds 1 lipoyl cofactor covalently.</text>
</comment>
<comment type="subunit">
    <text evidence="1">The glycine cleavage system is composed of four proteins: P, T, L and H.</text>
</comment>
<comment type="similarity">
    <text evidence="1">Belongs to the GcvH family.</text>
</comment>
<name>GCSH5_AQUAE</name>
<protein>
    <recommendedName>
        <fullName evidence="1">Glycine cleavage system H protein 5</fullName>
    </recommendedName>
</protein>
<feature type="chain" id="PRO_0000166201" description="Glycine cleavage system H protein 5">
    <location>
        <begin position="1"/>
        <end position="148"/>
    </location>
</feature>
<feature type="domain" description="Lipoyl-binding" evidence="2">
    <location>
        <begin position="33"/>
        <end position="115"/>
    </location>
</feature>
<feature type="modified residue" description="N6-lipoyllysine" evidence="1">
    <location>
        <position position="74"/>
    </location>
</feature>
<evidence type="ECO:0000255" key="1">
    <source>
        <dbReference type="HAMAP-Rule" id="MF_00272"/>
    </source>
</evidence>
<evidence type="ECO:0000255" key="2">
    <source>
        <dbReference type="PROSITE-ProRule" id="PRU01066"/>
    </source>
</evidence>
<organism>
    <name type="scientific">Aquifex aeolicus (strain VF5)</name>
    <dbReference type="NCBI Taxonomy" id="224324"/>
    <lineage>
        <taxon>Bacteria</taxon>
        <taxon>Pseudomonadati</taxon>
        <taxon>Aquificota</taxon>
        <taxon>Aquificia</taxon>
        <taxon>Aquificales</taxon>
        <taxon>Aquificaceae</taxon>
        <taxon>Aquifex</taxon>
    </lineage>
</organism>
<accession>O66720</accession>
<proteinExistence type="inferred from homology"/>
<gene>
    <name evidence="1" type="primary">gcvH5</name>
    <name type="ordered locus">aq_402</name>
</gene>
<sequence>MAEVNGCQLPEDRLYYINPDKNAFIWAKEEDGVFTIGLTSVAAAMAGRLVAYTPKKVGKAVKKDKSVATIESGKWVGPVPSPFDGEIVEVNEALKGNPALVNDDPYGQGWIAKVKPANPEEAKSVLVDANKAAELLQPIVQEKGVKCG</sequence>
<reference key="1">
    <citation type="journal article" date="1998" name="Nature">
        <title>The complete genome of the hyperthermophilic bacterium Aquifex aeolicus.</title>
        <authorList>
            <person name="Deckert G."/>
            <person name="Warren P.V."/>
            <person name="Gaasterland T."/>
            <person name="Young W.G."/>
            <person name="Lenox A.L."/>
            <person name="Graham D.E."/>
            <person name="Overbeek R."/>
            <person name="Snead M.A."/>
            <person name="Keller M."/>
            <person name="Aujay M."/>
            <person name="Huber R."/>
            <person name="Feldman R.A."/>
            <person name="Short J.M."/>
            <person name="Olsen G.J."/>
            <person name="Swanson R.V."/>
        </authorList>
    </citation>
    <scope>NUCLEOTIDE SEQUENCE [LARGE SCALE GENOMIC DNA]</scope>
    <source>
        <strain>VF5</strain>
    </source>
</reference>
<dbReference type="EMBL" id="AE000657">
    <property type="protein sequence ID" value="AAC06682.1"/>
    <property type="molecule type" value="Genomic_DNA"/>
</dbReference>
<dbReference type="PIR" id="D70336">
    <property type="entry name" value="D70336"/>
</dbReference>
<dbReference type="RefSeq" id="NP_213280.1">
    <property type="nucleotide sequence ID" value="NC_000918.1"/>
</dbReference>
<dbReference type="RefSeq" id="WP_010880218.1">
    <property type="nucleotide sequence ID" value="NC_000918.1"/>
</dbReference>
<dbReference type="SMR" id="O66720"/>
<dbReference type="STRING" id="224324.aq_402"/>
<dbReference type="EnsemblBacteria" id="AAC06682">
    <property type="protein sequence ID" value="AAC06682"/>
    <property type="gene ID" value="aq_402"/>
</dbReference>
<dbReference type="KEGG" id="aae:aq_402"/>
<dbReference type="PATRIC" id="fig|224324.8.peg.330"/>
<dbReference type="eggNOG" id="COG0509">
    <property type="taxonomic scope" value="Bacteria"/>
</dbReference>
<dbReference type="HOGENOM" id="CLU_097408_2_2_0"/>
<dbReference type="InParanoid" id="O66720"/>
<dbReference type="OrthoDB" id="13943at2"/>
<dbReference type="Proteomes" id="UP000000798">
    <property type="component" value="Chromosome"/>
</dbReference>
<dbReference type="GO" id="GO:0005829">
    <property type="term" value="C:cytosol"/>
    <property type="evidence" value="ECO:0000318"/>
    <property type="project" value="GO_Central"/>
</dbReference>
<dbReference type="GO" id="GO:0005960">
    <property type="term" value="C:glycine cleavage complex"/>
    <property type="evidence" value="ECO:0007669"/>
    <property type="project" value="InterPro"/>
</dbReference>
<dbReference type="GO" id="GO:0019464">
    <property type="term" value="P:glycine decarboxylation via glycine cleavage system"/>
    <property type="evidence" value="ECO:0007669"/>
    <property type="project" value="UniProtKB-UniRule"/>
</dbReference>
<dbReference type="CDD" id="cd06848">
    <property type="entry name" value="GCS_H"/>
    <property type="match status" value="1"/>
</dbReference>
<dbReference type="Gene3D" id="2.40.50.100">
    <property type="match status" value="1"/>
</dbReference>
<dbReference type="HAMAP" id="MF_00272">
    <property type="entry name" value="GcvH"/>
    <property type="match status" value="1"/>
</dbReference>
<dbReference type="InterPro" id="IPR003016">
    <property type="entry name" value="2-oxoA_DH_lipoyl-BS"/>
</dbReference>
<dbReference type="InterPro" id="IPR000089">
    <property type="entry name" value="Biotin_lipoyl"/>
</dbReference>
<dbReference type="InterPro" id="IPR002930">
    <property type="entry name" value="GCV_H"/>
</dbReference>
<dbReference type="InterPro" id="IPR033753">
    <property type="entry name" value="GCV_H/Fam206"/>
</dbReference>
<dbReference type="InterPro" id="IPR011053">
    <property type="entry name" value="Single_hybrid_motif"/>
</dbReference>
<dbReference type="NCBIfam" id="NF002270">
    <property type="entry name" value="PRK01202.1"/>
    <property type="match status" value="1"/>
</dbReference>
<dbReference type="PANTHER" id="PTHR11715">
    <property type="entry name" value="GLYCINE CLEAVAGE SYSTEM H PROTEIN"/>
    <property type="match status" value="1"/>
</dbReference>
<dbReference type="PANTHER" id="PTHR11715:SF3">
    <property type="entry name" value="GLYCINE CLEAVAGE SYSTEM H PROTEIN-RELATED"/>
    <property type="match status" value="1"/>
</dbReference>
<dbReference type="Pfam" id="PF01597">
    <property type="entry name" value="GCV_H"/>
    <property type="match status" value="1"/>
</dbReference>
<dbReference type="SUPFAM" id="SSF51230">
    <property type="entry name" value="Single hybrid motif"/>
    <property type="match status" value="1"/>
</dbReference>
<dbReference type="PROSITE" id="PS50968">
    <property type="entry name" value="BIOTINYL_LIPOYL"/>
    <property type="match status" value="1"/>
</dbReference>
<dbReference type="PROSITE" id="PS00189">
    <property type="entry name" value="LIPOYL"/>
    <property type="match status" value="1"/>
</dbReference>
<keyword id="KW-0450">Lipoyl</keyword>
<keyword id="KW-1185">Reference proteome</keyword>